<proteinExistence type="inferred from homology"/>
<protein>
    <recommendedName>
        <fullName>Beta sliding clamp</fullName>
        <shortName>Beta clamp</shortName>
        <shortName>Sliding clamp</shortName>
    </recommendedName>
    <alternativeName>
        <fullName>Beta-clamp processivity factor</fullName>
    </alternativeName>
    <alternativeName>
        <fullName>DNA polymerase III beta sliding clamp subunit</fullName>
    </alternativeName>
    <alternativeName>
        <fullName>DNA polymerase III subunit beta</fullName>
    </alternativeName>
</protein>
<name>DPO3B_VIBCH</name>
<gene>
    <name type="primary">dnaN</name>
    <name type="ordered locus">VC_0013</name>
</gene>
<sequence length="366" mass="40642">MKFTIERSHLIKPLQQVSGTLGGRASLPILGNLLLKVEENQLSMTATDLEVELISRVTLEGEFEAGSITVPARKFLDICRGLPDSAVITVLLEGDRIQVRSGRSRFSLATLPASDFPNIEDWQSEVQVSLTQAELRGLIEKTQFSMANQDVRYYLNGMLFEIDGTTLRSVATDGHRMAVAQAQLGADFAQKQIIVPRKGVLELVKLLDAPEQPVVLQIGHSNLRAEVNHFVFTSKLVDGRFPDYRRVLPQHTSKTLQTGCEELRQAFSRAAILSNEKFRGVRVNLADNGMRITANNPEQEEAEELLDVSFEGEPIEIGFNVSYILDVLNTLRCDNVRVSMSDANASALVENVDDDSAMYVVMPIRL</sequence>
<reference key="1">
    <citation type="journal article" date="2000" name="Nature">
        <title>DNA sequence of both chromosomes of the cholera pathogen Vibrio cholerae.</title>
        <authorList>
            <person name="Heidelberg J.F."/>
            <person name="Eisen J.A."/>
            <person name="Nelson W.C."/>
            <person name="Clayton R.A."/>
            <person name="Gwinn M.L."/>
            <person name="Dodson R.J."/>
            <person name="Haft D.H."/>
            <person name="Hickey E.K."/>
            <person name="Peterson J.D."/>
            <person name="Umayam L.A."/>
            <person name="Gill S.R."/>
            <person name="Nelson K.E."/>
            <person name="Read T.D."/>
            <person name="Tettelin H."/>
            <person name="Richardson D.L."/>
            <person name="Ermolaeva M.D."/>
            <person name="Vamathevan J.J."/>
            <person name="Bass S."/>
            <person name="Qin H."/>
            <person name="Dragoi I."/>
            <person name="Sellers P."/>
            <person name="McDonald L.A."/>
            <person name="Utterback T.R."/>
            <person name="Fleischmann R.D."/>
            <person name="Nierman W.C."/>
            <person name="White O."/>
            <person name="Salzberg S.L."/>
            <person name="Smith H.O."/>
            <person name="Colwell R.R."/>
            <person name="Mekalanos J.J."/>
            <person name="Venter J.C."/>
            <person name="Fraser C.M."/>
        </authorList>
    </citation>
    <scope>NUCLEOTIDE SEQUENCE [LARGE SCALE GENOMIC DNA]</scope>
    <source>
        <strain>ATCC 39315 / El Tor Inaba N16961</strain>
    </source>
</reference>
<dbReference type="EMBL" id="AE003852">
    <property type="protein sequence ID" value="AAF93191.1"/>
    <property type="molecule type" value="Genomic_DNA"/>
</dbReference>
<dbReference type="PIR" id="F82376">
    <property type="entry name" value="F82376"/>
</dbReference>
<dbReference type="RefSeq" id="NP_062597.1">
    <property type="nucleotide sequence ID" value="NC_002505.1"/>
</dbReference>
<dbReference type="RefSeq" id="WP_000673176.1">
    <property type="nucleotide sequence ID" value="NZ_LT906614.1"/>
</dbReference>
<dbReference type="SMR" id="Q9KVX5"/>
<dbReference type="STRING" id="243277.VC_0013"/>
<dbReference type="DNASU" id="2615703"/>
<dbReference type="EnsemblBacteria" id="AAF93191">
    <property type="protein sequence ID" value="AAF93191"/>
    <property type="gene ID" value="VC_0013"/>
</dbReference>
<dbReference type="KEGG" id="vch:VC_0013"/>
<dbReference type="PATRIC" id="fig|243277.26.peg.12"/>
<dbReference type="eggNOG" id="COG0592">
    <property type="taxonomic scope" value="Bacteria"/>
</dbReference>
<dbReference type="HOGENOM" id="CLU_038149_4_2_6"/>
<dbReference type="Proteomes" id="UP000000584">
    <property type="component" value="Chromosome 1"/>
</dbReference>
<dbReference type="GO" id="GO:0005737">
    <property type="term" value="C:cytoplasm"/>
    <property type="evidence" value="ECO:0007669"/>
    <property type="project" value="UniProtKB-SubCell"/>
</dbReference>
<dbReference type="GO" id="GO:0009360">
    <property type="term" value="C:DNA polymerase III complex"/>
    <property type="evidence" value="ECO:0007669"/>
    <property type="project" value="InterPro"/>
</dbReference>
<dbReference type="GO" id="GO:0008408">
    <property type="term" value="F:3'-5' exonuclease activity"/>
    <property type="evidence" value="ECO:0007669"/>
    <property type="project" value="InterPro"/>
</dbReference>
<dbReference type="GO" id="GO:0003677">
    <property type="term" value="F:DNA binding"/>
    <property type="evidence" value="ECO:0007669"/>
    <property type="project" value="UniProtKB-KW"/>
</dbReference>
<dbReference type="GO" id="GO:0003887">
    <property type="term" value="F:DNA-directed DNA polymerase activity"/>
    <property type="evidence" value="ECO:0007669"/>
    <property type="project" value="UniProtKB-KW"/>
</dbReference>
<dbReference type="GO" id="GO:0006271">
    <property type="term" value="P:DNA strand elongation involved in DNA replication"/>
    <property type="evidence" value="ECO:0000318"/>
    <property type="project" value="GO_Central"/>
</dbReference>
<dbReference type="CDD" id="cd00140">
    <property type="entry name" value="beta_clamp"/>
    <property type="match status" value="1"/>
</dbReference>
<dbReference type="FunFam" id="3.10.150.10:FF:000001">
    <property type="entry name" value="Beta sliding clamp"/>
    <property type="match status" value="1"/>
</dbReference>
<dbReference type="Gene3D" id="3.70.10.10">
    <property type="match status" value="1"/>
</dbReference>
<dbReference type="Gene3D" id="3.10.150.10">
    <property type="entry name" value="DNA Polymerase III, subunit A, domain 2"/>
    <property type="match status" value="1"/>
</dbReference>
<dbReference type="InterPro" id="IPR046938">
    <property type="entry name" value="DNA_clamp_sf"/>
</dbReference>
<dbReference type="InterPro" id="IPR001001">
    <property type="entry name" value="DNA_polIII_beta"/>
</dbReference>
<dbReference type="InterPro" id="IPR022635">
    <property type="entry name" value="DNA_polIII_beta_C"/>
</dbReference>
<dbReference type="InterPro" id="IPR022637">
    <property type="entry name" value="DNA_polIII_beta_cen"/>
</dbReference>
<dbReference type="InterPro" id="IPR022634">
    <property type="entry name" value="DNA_polIII_beta_N"/>
</dbReference>
<dbReference type="NCBIfam" id="TIGR00663">
    <property type="entry name" value="dnan"/>
    <property type="match status" value="1"/>
</dbReference>
<dbReference type="PANTHER" id="PTHR30478:SF0">
    <property type="entry name" value="BETA SLIDING CLAMP"/>
    <property type="match status" value="1"/>
</dbReference>
<dbReference type="PANTHER" id="PTHR30478">
    <property type="entry name" value="DNA POLYMERASE III SUBUNIT BETA"/>
    <property type="match status" value="1"/>
</dbReference>
<dbReference type="Pfam" id="PF00712">
    <property type="entry name" value="DNA_pol3_beta"/>
    <property type="match status" value="1"/>
</dbReference>
<dbReference type="Pfam" id="PF02767">
    <property type="entry name" value="DNA_pol3_beta_2"/>
    <property type="match status" value="1"/>
</dbReference>
<dbReference type="Pfam" id="PF02768">
    <property type="entry name" value="DNA_pol3_beta_3"/>
    <property type="match status" value="1"/>
</dbReference>
<dbReference type="PIRSF" id="PIRSF000804">
    <property type="entry name" value="DNA_pol_III_b"/>
    <property type="match status" value="1"/>
</dbReference>
<dbReference type="SMART" id="SM00480">
    <property type="entry name" value="POL3Bc"/>
    <property type="match status" value="1"/>
</dbReference>
<dbReference type="SUPFAM" id="SSF55979">
    <property type="entry name" value="DNA clamp"/>
    <property type="match status" value="3"/>
</dbReference>
<keyword id="KW-0963">Cytoplasm</keyword>
<keyword id="KW-0235">DNA replication</keyword>
<keyword id="KW-0238">DNA-binding</keyword>
<keyword id="KW-0239">DNA-directed DNA polymerase</keyword>
<keyword id="KW-0548">Nucleotidyltransferase</keyword>
<keyword id="KW-1185">Reference proteome</keyword>
<keyword id="KW-0808">Transferase</keyword>
<organism>
    <name type="scientific">Vibrio cholerae serotype O1 (strain ATCC 39315 / El Tor Inaba N16961)</name>
    <dbReference type="NCBI Taxonomy" id="243277"/>
    <lineage>
        <taxon>Bacteria</taxon>
        <taxon>Pseudomonadati</taxon>
        <taxon>Pseudomonadota</taxon>
        <taxon>Gammaproteobacteria</taxon>
        <taxon>Vibrionales</taxon>
        <taxon>Vibrionaceae</taxon>
        <taxon>Vibrio</taxon>
    </lineage>
</organism>
<feature type="chain" id="PRO_0000105477" description="Beta sliding clamp">
    <location>
        <begin position="1"/>
        <end position="366"/>
    </location>
</feature>
<accession>Q9KVX5</accession>
<comment type="function">
    <text evidence="1">Confers DNA tethering and processivity to DNA polymerases and other proteins. Acts as a clamp, forming a ring around DNA (a reaction catalyzed by the clamp-loading complex) which diffuses in an ATP-independent manner freely and bidirectionally along dsDNA. Initially characterized for its ability to contact the catalytic subunit of DNA polymerase III (Pol III), a complex, multichain enzyme responsible for most of the replicative synthesis in bacteria; Pol III exhibits 3'-5' exonuclease proofreading activity. The beta chain is required for initiation of replication as well as for processivity of DNA replication.</text>
</comment>
<comment type="subunit">
    <text evidence="1">Forms a ring-shaped head-to-tail homodimer around DNA which binds and tethers DNA polymerases and other proteins to the DNA. The DNA replisome complex has a single clamp-loading complex (3 tau and 1 each of delta, delta', psi and chi subunits) which binds 3 Pol III cores (1 core on the leading strand and 2 on the lagging strand) each with a beta sliding clamp dimer. Additional proteins in the replisome are other copies of gamma, psi and chi, Ssb, DNA helicase and RNA primase.</text>
</comment>
<comment type="subcellular location">
    <subcellularLocation>
        <location evidence="1">Cytoplasm</location>
    </subcellularLocation>
</comment>
<comment type="similarity">
    <text evidence="2">Belongs to the beta sliding clamp family.</text>
</comment>
<evidence type="ECO:0000250" key="1">
    <source>
        <dbReference type="UniProtKB" id="P0A988"/>
    </source>
</evidence>
<evidence type="ECO:0000305" key="2"/>